<accession>A4SM42</accession>
<comment type="function">
    <text evidence="1">Cleaves peptides in various proteins in a process that requires ATP hydrolysis. Has a chymotrypsin-like activity. Plays a major role in the degradation of misfolded proteins.</text>
</comment>
<comment type="catalytic activity">
    <reaction evidence="1">
        <text>Hydrolysis of proteins to small peptides in the presence of ATP and magnesium. alpha-casein is the usual test substrate. In the absence of ATP, only oligopeptides shorter than five residues are hydrolyzed (such as succinyl-Leu-Tyr-|-NHMec, and Leu-Tyr-Leu-|-Tyr-Trp, in which cleavage of the -Tyr-|-Leu- and -Tyr-|-Trp bonds also occurs).</text>
        <dbReference type="EC" id="3.4.21.92"/>
    </reaction>
</comment>
<comment type="subunit">
    <text evidence="1">Fourteen ClpP subunits assemble into 2 heptameric rings which stack back to back to give a disk-like structure with a central cavity, resembling the structure of eukaryotic proteasomes.</text>
</comment>
<comment type="subcellular location">
    <subcellularLocation>
        <location evidence="1">Cytoplasm</location>
    </subcellularLocation>
</comment>
<comment type="similarity">
    <text evidence="1">Belongs to the peptidase S14 family.</text>
</comment>
<keyword id="KW-0963">Cytoplasm</keyword>
<keyword id="KW-0378">Hydrolase</keyword>
<keyword id="KW-0645">Protease</keyword>
<keyword id="KW-0720">Serine protease</keyword>
<evidence type="ECO:0000255" key="1">
    <source>
        <dbReference type="HAMAP-Rule" id="MF_00444"/>
    </source>
</evidence>
<reference key="1">
    <citation type="journal article" date="2008" name="BMC Genomics">
        <title>The genome of Aeromonas salmonicida subsp. salmonicida A449: insights into the evolution of a fish pathogen.</title>
        <authorList>
            <person name="Reith M.E."/>
            <person name="Singh R.K."/>
            <person name="Curtis B."/>
            <person name="Boyd J.M."/>
            <person name="Bouevitch A."/>
            <person name="Kimball J."/>
            <person name="Munholland J."/>
            <person name="Murphy C."/>
            <person name="Sarty D."/>
            <person name="Williams J."/>
            <person name="Nash J.H."/>
            <person name="Johnson S.C."/>
            <person name="Brown L.L."/>
        </authorList>
    </citation>
    <scope>NUCLEOTIDE SEQUENCE [LARGE SCALE GENOMIC DNA]</scope>
    <source>
        <strain>A449</strain>
    </source>
</reference>
<protein>
    <recommendedName>
        <fullName evidence="1">ATP-dependent Clp protease proteolytic subunit</fullName>
        <ecNumber evidence="1">3.4.21.92</ecNumber>
    </recommendedName>
    <alternativeName>
        <fullName evidence="1">Endopeptidase Clp</fullName>
    </alternativeName>
</protein>
<gene>
    <name evidence="1" type="primary">clpP</name>
    <name type="ordered locus">ASA_1889</name>
</gene>
<proteinExistence type="inferred from homology"/>
<dbReference type="EC" id="3.4.21.92" evidence="1"/>
<dbReference type="EMBL" id="CP000644">
    <property type="protein sequence ID" value="ABO89964.1"/>
    <property type="molecule type" value="Genomic_DNA"/>
</dbReference>
<dbReference type="RefSeq" id="WP_005315368.1">
    <property type="nucleotide sequence ID" value="NC_009348.1"/>
</dbReference>
<dbReference type="SMR" id="A4SM42"/>
<dbReference type="STRING" id="29491.GCA_000820065_02741"/>
<dbReference type="MEROPS" id="S14.001"/>
<dbReference type="GeneID" id="79879613"/>
<dbReference type="KEGG" id="asa:ASA_1889"/>
<dbReference type="eggNOG" id="COG0740">
    <property type="taxonomic scope" value="Bacteria"/>
</dbReference>
<dbReference type="HOGENOM" id="CLU_058707_3_3_6"/>
<dbReference type="Proteomes" id="UP000000225">
    <property type="component" value="Chromosome"/>
</dbReference>
<dbReference type="GO" id="GO:0005737">
    <property type="term" value="C:cytoplasm"/>
    <property type="evidence" value="ECO:0007669"/>
    <property type="project" value="UniProtKB-SubCell"/>
</dbReference>
<dbReference type="GO" id="GO:0009368">
    <property type="term" value="C:endopeptidase Clp complex"/>
    <property type="evidence" value="ECO:0007669"/>
    <property type="project" value="TreeGrafter"/>
</dbReference>
<dbReference type="GO" id="GO:0004176">
    <property type="term" value="F:ATP-dependent peptidase activity"/>
    <property type="evidence" value="ECO:0007669"/>
    <property type="project" value="InterPro"/>
</dbReference>
<dbReference type="GO" id="GO:0051117">
    <property type="term" value="F:ATPase binding"/>
    <property type="evidence" value="ECO:0007669"/>
    <property type="project" value="TreeGrafter"/>
</dbReference>
<dbReference type="GO" id="GO:0004252">
    <property type="term" value="F:serine-type endopeptidase activity"/>
    <property type="evidence" value="ECO:0007669"/>
    <property type="project" value="UniProtKB-UniRule"/>
</dbReference>
<dbReference type="GO" id="GO:0006515">
    <property type="term" value="P:protein quality control for misfolded or incompletely synthesized proteins"/>
    <property type="evidence" value="ECO:0007669"/>
    <property type="project" value="TreeGrafter"/>
</dbReference>
<dbReference type="CDD" id="cd07017">
    <property type="entry name" value="S14_ClpP_2"/>
    <property type="match status" value="1"/>
</dbReference>
<dbReference type="FunFam" id="3.90.226.10:FF:000001">
    <property type="entry name" value="ATP-dependent Clp protease proteolytic subunit"/>
    <property type="match status" value="1"/>
</dbReference>
<dbReference type="Gene3D" id="3.90.226.10">
    <property type="entry name" value="2-enoyl-CoA Hydratase, Chain A, domain 1"/>
    <property type="match status" value="1"/>
</dbReference>
<dbReference type="HAMAP" id="MF_00444">
    <property type="entry name" value="ClpP"/>
    <property type="match status" value="1"/>
</dbReference>
<dbReference type="InterPro" id="IPR001907">
    <property type="entry name" value="ClpP"/>
</dbReference>
<dbReference type="InterPro" id="IPR029045">
    <property type="entry name" value="ClpP/crotonase-like_dom_sf"/>
</dbReference>
<dbReference type="InterPro" id="IPR023562">
    <property type="entry name" value="ClpP/TepA"/>
</dbReference>
<dbReference type="InterPro" id="IPR033135">
    <property type="entry name" value="ClpP_His_AS"/>
</dbReference>
<dbReference type="InterPro" id="IPR018215">
    <property type="entry name" value="ClpP_Ser_AS"/>
</dbReference>
<dbReference type="NCBIfam" id="TIGR00493">
    <property type="entry name" value="clpP"/>
    <property type="match status" value="1"/>
</dbReference>
<dbReference type="NCBIfam" id="NF001368">
    <property type="entry name" value="PRK00277.1"/>
    <property type="match status" value="1"/>
</dbReference>
<dbReference type="NCBIfam" id="NF009205">
    <property type="entry name" value="PRK12553.1"/>
    <property type="match status" value="1"/>
</dbReference>
<dbReference type="PANTHER" id="PTHR10381">
    <property type="entry name" value="ATP-DEPENDENT CLP PROTEASE PROTEOLYTIC SUBUNIT"/>
    <property type="match status" value="1"/>
</dbReference>
<dbReference type="PANTHER" id="PTHR10381:SF70">
    <property type="entry name" value="ATP-DEPENDENT CLP PROTEASE PROTEOLYTIC SUBUNIT"/>
    <property type="match status" value="1"/>
</dbReference>
<dbReference type="Pfam" id="PF00574">
    <property type="entry name" value="CLP_protease"/>
    <property type="match status" value="1"/>
</dbReference>
<dbReference type="PRINTS" id="PR00127">
    <property type="entry name" value="CLPPROTEASEP"/>
</dbReference>
<dbReference type="SUPFAM" id="SSF52096">
    <property type="entry name" value="ClpP/crotonase"/>
    <property type="match status" value="1"/>
</dbReference>
<dbReference type="PROSITE" id="PS00382">
    <property type="entry name" value="CLP_PROTEASE_HIS"/>
    <property type="match status" value="1"/>
</dbReference>
<dbReference type="PROSITE" id="PS00381">
    <property type="entry name" value="CLP_PROTEASE_SER"/>
    <property type="match status" value="1"/>
</dbReference>
<sequence>MYKNYNDVTESPRNALIPMVVEQTAKGERSYDIYSRLLKERVIFLTGQVEDHMANLVVAQLLFLESENPDQDISIYINSPGGAVTAGMSIYDTMQFIKPDVSTVCMGQACSMGAFLLAGGAKGKRFCLPSARVMIHQPLGGFQGQASDIQIHAQEILKIKNTLNERLAFHTGQEMATIERDTDRDNFMSADQAVAYGLVDGILSQRG</sequence>
<feature type="chain" id="PRO_1000189628" description="ATP-dependent Clp protease proteolytic subunit">
    <location>
        <begin position="1"/>
        <end position="207"/>
    </location>
</feature>
<feature type="active site" description="Nucleophile" evidence="1">
    <location>
        <position position="111"/>
    </location>
</feature>
<feature type="active site" evidence="1">
    <location>
        <position position="136"/>
    </location>
</feature>
<name>CLPP_AERS4</name>
<organism>
    <name type="scientific">Aeromonas salmonicida (strain A449)</name>
    <dbReference type="NCBI Taxonomy" id="382245"/>
    <lineage>
        <taxon>Bacteria</taxon>
        <taxon>Pseudomonadati</taxon>
        <taxon>Pseudomonadota</taxon>
        <taxon>Gammaproteobacteria</taxon>
        <taxon>Aeromonadales</taxon>
        <taxon>Aeromonadaceae</taxon>
        <taxon>Aeromonas</taxon>
    </lineage>
</organism>